<feature type="chain" id="PRO_0000271369" description="Zinc finger MYM-type protein 2">
    <location>
        <begin position="1"/>
        <end position="1377"/>
    </location>
</feature>
<feature type="zinc finger region" description="MYM-type 1" evidence="3">
    <location>
        <begin position="327"/>
        <end position="363"/>
    </location>
</feature>
<feature type="zinc finger region" description="MYM-type 2" evidence="3">
    <location>
        <begin position="369"/>
        <end position="409"/>
    </location>
</feature>
<feature type="zinc finger region" description="MYM-type 3" evidence="3">
    <location>
        <begin position="421"/>
        <end position="456"/>
    </location>
</feature>
<feature type="zinc finger region" description="MYM-type 4" evidence="3">
    <location>
        <begin position="463"/>
        <end position="502"/>
    </location>
</feature>
<feature type="zinc finger region" description="MYM-type 5" evidence="3">
    <location>
        <begin position="533"/>
        <end position="570"/>
    </location>
</feature>
<feature type="zinc finger region" description="MYM-type 6" evidence="3">
    <location>
        <begin position="636"/>
        <end position="671"/>
    </location>
</feature>
<feature type="zinc finger region" description="MYM-type 7" evidence="3">
    <location>
        <begin position="723"/>
        <end position="758"/>
    </location>
</feature>
<feature type="zinc finger region" description="MYM-type 8" evidence="3">
    <location>
        <begin position="764"/>
        <end position="799"/>
    </location>
</feature>
<feature type="region of interest" description="Disordered" evidence="4">
    <location>
        <begin position="85"/>
        <end position="177"/>
    </location>
</feature>
<feature type="region of interest" description="Disordered" evidence="4">
    <location>
        <begin position="273"/>
        <end position="305"/>
    </location>
</feature>
<feature type="region of interest" description="Disordered" evidence="4">
    <location>
        <begin position="983"/>
        <end position="1002"/>
    </location>
</feature>
<feature type="region of interest" description="Disordered" evidence="4">
    <location>
        <begin position="1028"/>
        <end position="1064"/>
    </location>
</feature>
<feature type="compositionally biased region" description="Polar residues" evidence="4">
    <location>
        <begin position="85"/>
        <end position="115"/>
    </location>
</feature>
<feature type="compositionally biased region" description="Polar residues" evidence="4">
    <location>
        <begin position="127"/>
        <end position="138"/>
    </location>
</feature>
<feature type="compositionally biased region" description="Basic and acidic residues" evidence="4">
    <location>
        <begin position="139"/>
        <end position="152"/>
    </location>
</feature>
<feature type="compositionally biased region" description="Polar residues" evidence="4">
    <location>
        <begin position="153"/>
        <end position="164"/>
    </location>
</feature>
<feature type="compositionally biased region" description="Polar residues" evidence="4">
    <location>
        <begin position="284"/>
        <end position="298"/>
    </location>
</feature>
<feature type="compositionally biased region" description="Basic residues" evidence="4">
    <location>
        <begin position="1039"/>
        <end position="1050"/>
    </location>
</feature>
<feature type="modified residue" description="Phosphoserine" evidence="2">
    <location>
        <position position="159"/>
    </location>
</feature>
<feature type="modified residue" description="Phosphoserine" evidence="2">
    <location>
        <position position="305"/>
    </location>
</feature>
<feature type="modified residue" description="Phosphoserine" evidence="2">
    <location>
        <position position="838"/>
    </location>
</feature>
<feature type="modified residue" description="Phosphoserine" evidence="2">
    <location>
        <position position="958"/>
    </location>
</feature>
<feature type="modified residue" description="Phosphoserine" evidence="1">
    <location>
        <position position="1064"/>
    </location>
</feature>
<feature type="modified residue" description="Phosphothreonine" evidence="2">
    <location>
        <position position="1376"/>
    </location>
</feature>
<feature type="cross-link" description="Glycyl lysine isopeptide (Lys-Gly) (interchain with G-Cter in SUMO2)" evidence="2">
    <location>
        <position position="48"/>
    </location>
</feature>
<feature type="cross-link" description="Glycyl lysine isopeptide (Lys-Gly) (interchain with G-Cter in SUMO2)" evidence="2">
    <location>
        <position position="88"/>
    </location>
</feature>
<feature type="cross-link" description="Glycyl lysine isopeptide (Lys-Gly) (interchain with G-Cter in SUMO2)" evidence="2">
    <location>
        <position position="98"/>
    </location>
</feature>
<feature type="cross-link" description="Glycyl lysine isopeptide (Lys-Gly) (interchain with G-Cter in SUMO2)" evidence="2">
    <location>
        <position position="104"/>
    </location>
</feature>
<feature type="cross-link" description="Glycyl lysine isopeptide (Lys-Gly) (interchain with G-Cter in SUMO2)" evidence="2">
    <location>
        <position position="147"/>
    </location>
</feature>
<feature type="cross-link" description="Glycyl lysine isopeptide (Lys-Gly) (interchain with G-Cter in SUMO2)" evidence="2">
    <location>
        <position position="253"/>
    </location>
</feature>
<feature type="cross-link" description="Glycyl lysine isopeptide (Lys-Gly) (interchain with G-Cter in SUMO2)" evidence="2">
    <location>
        <position position="297"/>
    </location>
</feature>
<feature type="cross-link" description="Glycyl lysine isopeptide (Lys-Gly) (interchain with G-Cter in SUMO2)" evidence="2">
    <location>
        <position position="312"/>
    </location>
</feature>
<feature type="cross-link" description="Glycyl lysine isopeptide (Lys-Gly) (interchain with G-Cter in SUMO2)" evidence="2">
    <location>
        <position position="325"/>
    </location>
</feature>
<feature type="cross-link" description="Glycyl lysine isopeptide (Lys-Gly) (interchain with G-Cter in SUMO2)" evidence="2">
    <location>
        <position position="348"/>
    </location>
</feature>
<feature type="cross-link" description="Glycyl lysine isopeptide (Lys-Gly) (interchain with G-Cter in SUMO2)" evidence="2">
    <location>
        <position position="366"/>
    </location>
</feature>
<feature type="cross-link" description="Glycyl lysine isopeptide (Lys-Gly) (interchain with G-Cter in SUMO2)" evidence="2">
    <location>
        <position position="417"/>
    </location>
</feature>
<feature type="cross-link" description="Glycyl lysine isopeptide (Lys-Gly) (interchain with G-Cter in SUMO2)" evidence="2">
    <location>
        <position position="441"/>
    </location>
</feature>
<feature type="cross-link" description="Glycyl lysine isopeptide (Lys-Gly) (interchain with G-Cter in SUMO2)" evidence="2">
    <location>
        <position position="491"/>
    </location>
</feature>
<feature type="cross-link" description="Glycyl lysine isopeptide (Lys-Gly) (interchain with G-Cter in SUMO2)" evidence="2">
    <location>
        <position position="503"/>
    </location>
</feature>
<feature type="cross-link" description="Glycyl lysine isopeptide (Lys-Gly) (interchain with G-Cter in SUMO2)" evidence="2">
    <location>
        <position position="513"/>
    </location>
</feature>
<feature type="cross-link" description="Glycyl lysine isopeptide (Lys-Gly) (interchain with G-Cter in SUMO2)" evidence="2">
    <location>
        <position position="529"/>
    </location>
</feature>
<feature type="cross-link" description="Glycyl lysine isopeptide (Lys-Gly) (interchain with G-Cter in SUMO2)" evidence="2">
    <location>
        <position position="532"/>
    </location>
</feature>
<feature type="cross-link" description="Glycyl lysine isopeptide (Lys-Gly) (interchain with G-Cter in SUMO2)" evidence="2">
    <location>
        <position position="576"/>
    </location>
</feature>
<feature type="cross-link" description="Glycyl lysine isopeptide (Lys-Gly) (interchain with G-Cter in SUMO2)" evidence="2">
    <location>
        <position position="603"/>
    </location>
</feature>
<feature type="cross-link" description="Glycyl lysine isopeptide (Lys-Gly) (interchain with G-Cter in SUMO2)" evidence="2">
    <location>
        <position position="649"/>
    </location>
</feature>
<feature type="cross-link" description="Glycyl lysine isopeptide (Lys-Gly) (interchain with G-Cter in SUMO2)" evidence="2">
    <location>
        <position position="658"/>
    </location>
</feature>
<feature type="cross-link" description="Glycyl lysine isopeptide (Lys-Gly) (interchain with G-Cter in SUMO2)" evidence="2">
    <location>
        <position position="688"/>
    </location>
</feature>
<feature type="cross-link" description="Glycyl lysine isopeptide (Lys-Gly) (interchain with G-Cter in SUMO2)" evidence="2">
    <location>
        <position position="700"/>
    </location>
</feature>
<feature type="cross-link" description="Glycyl lysine isopeptide (Lys-Gly) (interchain with G-Cter in SUMO2)" evidence="2">
    <location>
        <position position="709"/>
    </location>
</feature>
<feature type="cross-link" description="Glycyl lysine isopeptide (Lys-Gly) (interchain with G-Cter in SUMO2)" evidence="2">
    <location>
        <position position="764"/>
    </location>
</feature>
<feature type="cross-link" description="Glycyl lysine isopeptide (Lys-Gly) (interchain with G-Cter in SUMO2)" evidence="2">
    <location>
        <position position="788"/>
    </location>
</feature>
<feature type="cross-link" description="Glycyl lysine isopeptide (Lys-Gly) (interchain with G-Cter in SUMO2)" evidence="2">
    <location>
        <position position="812"/>
    </location>
</feature>
<feature type="cross-link" description="Glycyl lysine isopeptide (Lys-Gly) (interchain with G-Cter in SUMO2)" evidence="2">
    <location>
        <position position="829"/>
    </location>
</feature>
<keyword id="KW-1017">Isopeptide bond</keyword>
<keyword id="KW-0479">Metal-binding</keyword>
<keyword id="KW-0539">Nucleus</keyword>
<keyword id="KW-0597">Phosphoprotein</keyword>
<keyword id="KW-1185">Reference proteome</keyword>
<keyword id="KW-0677">Repeat</keyword>
<keyword id="KW-0804">Transcription</keyword>
<keyword id="KW-0805">Transcription regulation</keyword>
<keyword id="KW-0832">Ubl conjugation</keyword>
<keyword id="KW-0862">Zinc</keyword>
<keyword id="KW-0863">Zinc-finger</keyword>
<reference key="1">
    <citation type="submission" date="2004-11" db="EMBL/GenBank/DDBJ databases">
        <authorList>
            <consortium name="The German cDNA consortium"/>
        </authorList>
    </citation>
    <scope>NUCLEOTIDE SEQUENCE [LARGE SCALE MRNA]</scope>
    <source>
        <tissue>Brain cortex</tissue>
    </source>
</reference>
<gene>
    <name type="primary">ZMYM2</name>
    <name type="synonym">ZNF198</name>
</gene>
<name>ZMYM2_PONAB</name>
<evidence type="ECO:0000250" key="1">
    <source>
        <dbReference type="UniProtKB" id="Q9CU65"/>
    </source>
</evidence>
<evidence type="ECO:0000250" key="2">
    <source>
        <dbReference type="UniProtKB" id="Q9UBW7"/>
    </source>
</evidence>
<evidence type="ECO:0000255" key="3"/>
<evidence type="ECO:0000256" key="4">
    <source>
        <dbReference type="SAM" id="MobiDB-lite"/>
    </source>
</evidence>
<evidence type="ECO:0000305" key="5"/>
<sequence>MDTSSVGGLELTDQTPVLLGSTAMATSLTNVGNSFSGPANPLVSRSNKFQNSSVEDDDDVVFIEPVQPPPPSVPVVADQRTITFTSSKNEELQGNDSKITPSSKELASQKGSVSETIVIDDEEDMETNQGQEKNSSNFIERRPPETKNRTNDVDFSTSSFSRSKVNAGMGNSGITTEPDSEIQIANVTTLETGVSSVNDGQLENTDGRDMNLMITHVTSLQNTNLGDVSNGLQSSNFGVNIQTYTPSLTSQTKTGVGPFNPGRMNVAGDVFQNGESATHHNPDSWISQSASFPRNQKQPGVDSLSPVASLPKQIFQPSAQQQPTKPVKVTCANCKKPLQKGQTAYQRKGSAHLFCSTTCLSSFSHKPAPKKLCVMCKKDITTMKGTIVAQVDSSESFQEFCSTSCLSLYEDKQNPTKGALNKSRCTICGKLTEIRHEVSFKNMTHKLCSDHCFNRYRMANGLIMNCCEQCGEYLPSKGAGNNVLVIDGQQKRFCCQSCVSEYKQVGSHPSFLKEVRDHMQDSFLMQPEKYGKLTTCTGCRTQCRFFDMTQCIGPNGYMEPYCSTACMNSHKTKYAKSQSLGIICHFCKRNSLPQYQTTMPDGKLYNFCNSSCVAKFQALSMQSSPNGQFVAPSDIQLKCNYCKNSFCSKPEILEWENKVHQFCSKTCSDDYKKLHCIVTYCEYCQEEKTLHETVNFSGVKRPFCSEGCKLLYKQDFARRLGLRCVTCNYCSQLCKKGATKELDGVVRDFCSEDCCKKFQDWYYKAARCDCCKSQGTLKERVQWRGEMKHFCDQHCLLRFYCQQNEPNMTTQKGPENLHYDQGCQTSRTKMTGSAPPPSPTPNKEMKNKAVLCKPLTMTKATYCKPHMQTKSCQTDDTWKTEYVPVPIPVPVYIPVPMHMYSQNIPVPTTVPVPVPVPVFLPAPLDSSEKIPAAIEELKSKVSSDALDTELLTMTDMMSEDEGKTETTNINSVIIETDIIGSDLLKNSDPETQSSMPDVPYEPDLDIEIDFPRAAEELDMENEFLLPPVFGEEYEEQPRPRSKKKGAKRKAVSGYQSHDDSSDNSECSFPFKYTYGVNAWKHWVKTRQLDEDLLVLDELKSSKSVKLKEDLLSHTTAELNYGLAHFVNEIRRPNGENYAPDSIYYLCLGIQEYLCGSNRKDNIFIDPGYQTFEQELNKILRSWQPSILPDGSIFSRVEEDYLWRIKQLGSHSPVALLNTLFYFNTKYFGLKTVEQHLRLSFGTVFRHWKKNPLTMENKACLRYQVSSLCGTDNEDKITTGKRKHEDDEPVFEQIENTANPSRCPVKMFECYLSKSPQNLNQRMDVFYLQPECSSSTDSPVWYTSTSLDRNTLENMLVRVLLVKDIYDKDNYELDEDTD</sequence>
<organism>
    <name type="scientific">Pongo abelii</name>
    <name type="common">Sumatran orangutan</name>
    <name type="synonym">Pongo pygmaeus abelii</name>
    <dbReference type="NCBI Taxonomy" id="9601"/>
    <lineage>
        <taxon>Eukaryota</taxon>
        <taxon>Metazoa</taxon>
        <taxon>Chordata</taxon>
        <taxon>Craniata</taxon>
        <taxon>Vertebrata</taxon>
        <taxon>Euteleostomi</taxon>
        <taxon>Mammalia</taxon>
        <taxon>Eutheria</taxon>
        <taxon>Euarchontoglires</taxon>
        <taxon>Primates</taxon>
        <taxon>Haplorrhini</taxon>
        <taxon>Catarrhini</taxon>
        <taxon>Hominidae</taxon>
        <taxon>Pongo</taxon>
    </lineage>
</organism>
<protein>
    <recommendedName>
        <fullName>Zinc finger MYM-type protein 2</fullName>
    </recommendedName>
    <alternativeName>
        <fullName>Zinc finger protein 198</fullName>
    </alternativeName>
</protein>
<comment type="function">
    <text>May function as a transcription factor.</text>
</comment>
<comment type="subunit">
    <text evidence="2">May be a component of a BHC histone deacetylase complex that contains HDAC1, HDAC2, HMG20B/BRAF35, KDM1A, RCOR1/CoREST, PHF21A/BHC80, ZNF198, ZNF217, ZMYM3, GSE1 and GTF2I.</text>
</comment>
<comment type="subcellular location">
    <subcellularLocation>
        <location evidence="5">Nucleus</location>
    </subcellularLocation>
</comment>
<proteinExistence type="evidence at transcript level"/>
<accession>Q5RDJ2</accession>
<dbReference type="EMBL" id="CR857916">
    <property type="protein sequence ID" value="CAH90165.1"/>
    <property type="molecule type" value="mRNA"/>
</dbReference>
<dbReference type="RefSeq" id="NP_001127246.1">
    <property type="nucleotide sequence ID" value="NM_001133774.1"/>
</dbReference>
<dbReference type="SMR" id="Q5RDJ2"/>
<dbReference type="FunCoup" id="Q5RDJ2">
    <property type="interactions" value="4874"/>
</dbReference>
<dbReference type="STRING" id="9601.ENSPPYP00000005911"/>
<dbReference type="GeneID" id="100174301"/>
<dbReference type="KEGG" id="pon:100174301"/>
<dbReference type="CTD" id="7750"/>
<dbReference type="eggNOG" id="ENOG502QQQ9">
    <property type="taxonomic scope" value="Eukaryota"/>
</dbReference>
<dbReference type="InParanoid" id="Q5RDJ2"/>
<dbReference type="OrthoDB" id="10025028at2759"/>
<dbReference type="Proteomes" id="UP000001595">
    <property type="component" value="Unplaced"/>
</dbReference>
<dbReference type="GO" id="GO:0005634">
    <property type="term" value="C:nucleus"/>
    <property type="evidence" value="ECO:0007669"/>
    <property type="project" value="UniProtKB-SubCell"/>
</dbReference>
<dbReference type="GO" id="GO:0008270">
    <property type="term" value="F:zinc ion binding"/>
    <property type="evidence" value="ECO:0007669"/>
    <property type="project" value="UniProtKB-KW"/>
</dbReference>
<dbReference type="InterPro" id="IPR021893">
    <property type="entry name" value="DUF3504"/>
</dbReference>
<dbReference type="InterPro" id="IPR011017">
    <property type="entry name" value="TRASH_dom"/>
</dbReference>
<dbReference type="InterPro" id="IPR010507">
    <property type="entry name" value="Znf_MYM"/>
</dbReference>
<dbReference type="InterPro" id="IPR051284">
    <property type="entry name" value="ZnF_MYMT-QRICH1"/>
</dbReference>
<dbReference type="PANTHER" id="PTHR45736">
    <property type="entry name" value="ZINC FINGER MYM-TYPE PROTEIN"/>
    <property type="match status" value="1"/>
</dbReference>
<dbReference type="PANTHER" id="PTHR45736:SF6">
    <property type="entry name" value="ZINC FINGER MYM-TYPE PROTEIN 2"/>
    <property type="match status" value="1"/>
</dbReference>
<dbReference type="Pfam" id="PF12012">
    <property type="entry name" value="DUF3504"/>
    <property type="match status" value="1"/>
</dbReference>
<dbReference type="Pfam" id="PF06467">
    <property type="entry name" value="zf-FCS"/>
    <property type="match status" value="9"/>
</dbReference>
<dbReference type="SMART" id="SM00746">
    <property type="entry name" value="TRASH"/>
    <property type="match status" value="9"/>
</dbReference>
<dbReference type="SUPFAM" id="SSF57716">
    <property type="entry name" value="Glucocorticoid receptor-like (DNA-binding domain)"/>
    <property type="match status" value="1"/>
</dbReference>